<accession>Q9KKZ9</accession>
<comment type="similarity">
    <text evidence="1">Belongs to the UPF0145 family.</text>
</comment>
<evidence type="ECO:0000305" key="1"/>
<dbReference type="EMBL" id="AE003853">
    <property type="protein sequence ID" value="AAF96847.1"/>
    <property type="molecule type" value="Genomic_DNA"/>
</dbReference>
<dbReference type="PIR" id="G82395">
    <property type="entry name" value="G82395"/>
</dbReference>
<dbReference type="RefSeq" id="NP_233335.1">
    <property type="nucleotide sequence ID" value="NC_002506.1"/>
</dbReference>
<dbReference type="RefSeq" id="WP_000637494.1">
    <property type="nucleotide sequence ID" value="NC_002506.1"/>
</dbReference>
<dbReference type="SMR" id="Q9KKZ9"/>
<dbReference type="STRING" id="243277.VC_A0951"/>
<dbReference type="DNASU" id="2612764"/>
<dbReference type="EnsemblBacteria" id="AAF96847">
    <property type="protein sequence ID" value="AAF96847"/>
    <property type="gene ID" value="VC_A0951"/>
</dbReference>
<dbReference type="KEGG" id="vch:VC_A0951"/>
<dbReference type="PATRIC" id="fig|243277.26.peg.3562"/>
<dbReference type="eggNOG" id="COG0393">
    <property type="taxonomic scope" value="Bacteria"/>
</dbReference>
<dbReference type="HOGENOM" id="CLU_117144_3_2_6"/>
<dbReference type="Proteomes" id="UP000000584">
    <property type="component" value="Chromosome 2"/>
</dbReference>
<dbReference type="Gene3D" id="3.30.110.70">
    <property type="entry name" value="Hypothetical protein apc22750. Chain B"/>
    <property type="match status" value="1"/>
</dbReference>
<dbReference type="HAMAP" id="MF_00338">
    <property type="entry name" value="UPF0145"/>
    <property type="match status" value="1"/>
</dbReference>
<dbReference type="InterPro" id="IPR035439">
    <property type="entry name" value="UPF0145_dom_sf"/>
</dbReference>
<dbReference type="InterPro" id="IPR002765">
    <property type="entry name" value="UPF0145_YbjQ-like"/>
</dbReference>
<dbReference type="NCBIfam" id="NF002776">
    <property type="entry name" value="PRK02877.1"/>
    <property type="match status" value="1"/>
</dbReference>
<dbReference type="PANTHER" id="PTHR34068">
    <property type="entry name" value="UPF0145 PROTEIN YBJQ"/>
    <property type="match status" value="1"/>
</dbReference>
<dbReference type="PANTHER" id="PTHR34068:SF1">
    <property type="entry name" value="UPF0145 PROTEIN YBJQ"/>
    <property type="match status" value="1"/>
</dbReference>
<dbReference type="Pfam" id="PF01906">
    <property type="entry name" value="YbjQ_1"/>
    <property type="match status" value="1"/>
</dbReference>
<dbReference type="SUPFAM" id="SSF117782">
    <property type="entry name" value="YbjQ-like"/>
    <property type="match status" value="1"/>
</dbReference>
<reference key="1">
    <citation type="journal article" date="2000" name="Nature">
        <title>DNA sequence of both chromosomes of the cholera pathogen Vibrio cholerae.</title>
        <authorList>
            <person name="Heidelberg J.F."/>
            <person name="Eisen J.A."/>
            <person name="Nelson W.C."/>
            <person name="Clayton R.A."/>
            <person name="Gwinn M.L."/>
            <person name="Dodson R.J."/>
            <person name="Haft D.H."/>
            <person name="Hickey E.K."/>
            <person name="Peterson J.D."/>
            <person name="Umayam L.A."/>
            <person name="Gill S.R."/>
            <person name="Nelson K.E."/>
            <person name="Read T.D."/>
            <person name="Tettelin H."/>
            <person name="Richardson D.L."/>
            <person name="Ermolaeva M.D."/>
            <person name="Vamathevan J.J."/>
            <person name="Bass S."/>
            <person name="Qin H."/>
            <person name="Dragoi I."/>
            <person name="Sellers P."/>
            <person name="McDonald L.A."/>
            <person name="Utterback T.R."/>
            <person name="Fleischmann R.D."/>
            <person name="Nierman W.C."/>
            <person name="White O."/>
            <person name="Salzberg S.L."/>
            <person name="Smith H.O."/>
            <person name="Colwell R.R."/>
            <person name="Mekalanos J.J."/>
            <person name="Venter J.C."/>
            <person name="Fraser C.M."/>
        </authorList>
    </citation>
    <scope>NUCLEOTIDE SEQUENCE [LARGE SCALE GENOMIC DNA]</scope>
    <source>
        <strain>ATCC 39315 / El Tor Inaba N16961</strain>
    </source>
</reference>
<sequence length="106" mass="11165">MIVTTTPNIEGKRIVRYCGVIAGEAILGANIFKDLSAGIRDIVGGRSGTYERELEKARAIALEELQQHAVALGANAVVGIDLDYETFGKANGMLMVSVSGTAVVVE</sequence>
<proteinExistence type="inferred from homology"/>
<gene>
    <name type="ordered locus">VC_A0951</name>
</gene>
<protein>
    <recommendedName>
        <fullName>UPF0145 protein VC_A0951</fullName>
    </recommendedName>
</protein>
<name>Y3751_VIBCH</name>
<organism>
    <name type="scientific">Vibrio cholerae serotype O1 (strain ATCC 39315 / El Tor Inaba N16961)</name>
    <dbReference type="NCBI Taxonomy" id="243277"/>
    <lineage>
        <taxon>Bacteria</taxon>
        <taxon>Pseudomonadati</taxon>
        <taxon>Pseudomonadota</taxon>
        <taxon>Gammaproteobacteria</taxon>
        <taxon>Vibrionales</taxon>
        <taxon>Vibrionaceae</taxon>
        <taxon>Vibrio</taxon>
    </lineage>
</organism>
<feature type="chain" id="PRO_0000138486" description="UPF0145 protein VC_A0951">
    <location>
        <begin position="1"/>
        <end position="106"/>
    </location>
</feature>
<keyword id="KW-1185">Reference proteome</keyword>